<comment type="function">
    <text evidence="1">Involved in the biosynthesis of the chorismate, which leads to the biosynthesis of aromatic amino acids. Catalyzes the reversible NADPH linked reduction of 3-dehydroshikimate (DHSA) to yield shikimate (SA).</text>
</comment>
<comment type="catalytic activity">
    <reaction evidence="1">
        <text>shikimate + NADP(+) = 3-dehydroshikimate + NADPH + H(+)</text>
        <dbReference type="Rhea" id="RHEA:17737"/>
        <dbReference type="ChEBI" id="CHEBI:15378"/>
        <dbReference type="ChEBI" id="CHEBI:16630"/>
        <dbReference type="ChEBI" id="CHEBI:36208"/>
        <dbReference type="ChEBI" id="CHEBI:57783"/>
        <dbReference type="ChEBI" id="CHEBI:58349"/>
        <dbReference type="EC" id="1.1.1.25"/>
    </reaction>
</comment>
<comment type="pathway">
    <text evidence="1">Metabolic intermediate biosynthesis; chorismate biosynthesis; chorismate from D-erythrose 4-phosphate and phosphoenolpyruvate: step 4/7.</text>
</comment>
<comment type="subunit">
    <text evidence="1">Homodimer.</text>
</comment>
<comment type="similarity">
    <text evidence="1">Belongs to the shikimate dehydrogenase family.</text>
</comment>
<dbReference type="EC" id="1.1.1.25" evidence="1"/>
<dbReference type="EMBL" id="CP001616">
    <property type="protein sequence ID" value="ACQ91790.1"/>
    <property type="molecule type" value="Genomic_DNA"/>
</dbReference>
<dbReference type="RefSeq" id="WP_012728389.1">
    <property type="nucleotide sequence ID" value="NC_012691.1"/>
</dbReference>
<dbReference type="SMR" id="C4L7Z1"/>
<dbReference type="STRING" id="595494.Tola_0160"/>
<dbReference type="KEGG" id="tau:Tola_0160"/>
<dbReference type="eggNOG" id="COG0169">
    <property type="taxonomic scope" value="Bacteria"/>
</dbReference>
<dbReference type="HOGENOM" id="CLU_044063_2_1_6"/>
<dbReference type="OrthoDB" id="9776868at2"/>
<dbReference type="UniPathway" id="UPA00053">
    <property type="reaction ID" value="UER00087"/>
</dbReference>
<dbReference type="Proteomes" id="UP000009073">
    <property type="component" value="Chromosome"/>
</dbReference>
<dbReference type="GO" id="GO:0005829">
    <property type="term" value="C:cytosol"/>
    <property type="evidence" value="ECO:0007669"/>
    <property type="project" value="TreeGrafter"/>
</dbReference>
<dbReference type="GO" id="GO:0050661">
    <property type="term" value="F:NADP binding"/>
    <property type="evidence" value="ECO:0007669"/>
    <property type="project" value="InterPro"/>
</dbReference>
<dbReference type="GO" id="GO:0004764">
    <property type="term" value="F:shikimate 3-dehydrogenase (NADP+) activity"/>
    <property type="evidence" value="ECO:0007669"/>
    <property type="project" value="UniProtKB-UniRule"/>
</dbReference>
<dbReference type="GO" id="GO:0008652">
    <property type="term" value="P:amino acid biosynthetic process"/>
    <property type="evidence" value="ECO:0007669"/>
    <property type="project" value="UniProtKB-KW"/>
</dbReference>
<dbReference type="GO" id="GO:0009073">
    <property type="term" value="P:aromatic amino acid family biosynthetic process"/>
    <property type="evidence" value="ECO:0007669"/>
    <property type="project" value="UniProtKB-KW"/>
</dbReference>
<dbReference type="GO" id="GO:0009423">
    <property type="term" value="P:chorismate biosynthetic process"/>
    <property type="evidence" value="ECO:0007669"/>
    <property type="project" value="UniProtKB-UniRule"/>
</dbReference>
<dbReference type="GO" id="GO:0019632">
    <property type="term" value="P:shikimate metabolic process"/>
    <property type="evidence" value="ECO:0007669"/>
    <property type="project" value="InterPro"/>
</dbReference>
<dbReference type="CDD" id="cd01065">
    <property type="entry name" value="NAD_bind_Shikimate_DH"/>
    <property type="match status" value="1"/>
</dbReference>
<dbReference type="FunFam" id="3.40.50.10860:FF:000006">
    <property type="entry name" value="Shikimate dehydrogenase (NADP(+))"/>
    <property type="match status" value="1"/>
</dbReference>
<dbReference type="FunFam" id="3.40.50.720:FF:000104">
    <property type="entry name" value="Shikimate dehydrogenase (NADP(+))"/>
    <property type="match status" value="1"/>
</dbReference>
<dbReference type="Gene3D" id="3.40.50.10860">
    <property type="entry name" value="Leucine Dehydrogenase, chain A, domain 1"/>
    <property type="match status" value="1"/>
</dbReference>
<dbReference type="Gene3D" id="3.40.50.720">
    <property type="entry name" value="NAD(P)-binding Rossmann-like Domain"/>
    <property type="match status" value="1"/>
</dbReference>
<dbReference type="HAMAP" id="MF_00222">
    <property type="entry name" value="Shikimate_DH_AroE"/>
    <property type="match status" value="1"/>
</dbReference>
<dbReference type="InterPro" id="IPR046346">
    <property type="entry name" value="Aminoacid_DH-like_N_sf"/>
</dbReference>
<dbReference type="InterPro" id="IPR036291">
    <property type="entry name" value="NAD(P)-bd_dom_sf"/>
</dbReference>
<dbReference type="InterPro" id="IPR041121">
    <property type="entry name" value="SDH_C"/>
</dbReference>
<dbReference type="InterPro" id="IPR011342">
    <property type="entry name" value="Shikimate_DH"/>
</dbReference>
<dbReference type="InterPro" id="IPR013708">
    <property type="entry name" value="Shikimate_DH-bd_N"/>
</dbReference>
<dbReference type="InterPro" id="IPR022893">
    <property type="entry name" value="Shikimate_DH_fam"/>
</dbReference>
<dbReference type="InterPro" id="IPR006151">
    <property type="entry name" value="Shikm_DH/Glu-tRNA_Rdtase"/>
</dbReference>
<dbReference type="NCBIfam" id="TIGR00507">
    <property type="entry name" value="aroE"/>
    <property type="match status" value="1"/>
</dbReference>
<dbReference type="NCBIfam" id="NF001310">
    <property type="entry name" value="PRK00258.1-2"/>
    <property type="match status" value="1"/>
</dbReference>
<dbReference type="PANTHER" id="PTHR21089:SF1">
    <property type="entry name" value="BIFUNCTIONAL 3-DEHYDROQUINATE DEHYDRATASE_SHIKIMATE DEHYDROGENASE, CHLOROPLASTIC"/>
    <property type="match status" value="1"/>
</dbReference>
<dbReference type="PANTHER" id="PTHR21089">
    <property type="entry name" value="SHIKIMATE DEHYDROGENASE"/>
    <property type="match status" value="1"/>
</dbReference>
<dbReference type="Pfam" id="PF18317">
    <property type="entry name" value="SDH_C"/>
    <property type="match status" value="1"/>
</dbReference>
<dbReference type="Pfam" id="PF01488">
    <property type="entry name" value="Shikimate_DH"/>
    <property type="match status" value="1"/>
</dbReference>
<dbReference type="Pfam" id="PF08501">
    <property type="entry name" value="Shikimate_dh_N"/>
    <property type="match status" value="1"/>
</dbReference>
<dbReference type="SUPFAM" id="SSF53223">
    <property type="entry name" value="Aminoacid dehydrogenase-like, N-terminal domain"/>
    <property type="match status" value="1"/>
</dbReference>
<dbReference type="SUPFAM" id="SSF51735">
    <property type="entry name" value="NAD(P)-binding Rossmann-fold domains"/>
    <property type="match status" value="1"/>
</dbReference>
<name>AROE_TOLAT</name>
<proteinExistence type="inferred from homology"/>
<accession>C4L7Z1</accession>
<sequence>MDRYAVFGNPINHSKSPFIHTLFARQTQQLLTYEKIEAPVDDFVGSIRRFFAEGGKGANVTVPFKEQAFQLVDQLSPRAKLAGAVNTLKLTDDGLLLGDNTDGAGLVQDLKYHLEELAGKKILLLGAGGACRGVIGPLLEQRPSEIVIANRTVAKAEQLAQEFAAMGKVRVSQFAELNESFDLIINGTSASLAGAMPDIPDAVIGSATVTYDMMYGSKETVFNLWAKEHGAIKTIDGLGMLVCQAAESFAVWRGIRPGTRQVIRELRRNITGA</sequence>
<gene>
    <name evidence="1" type="primary">aroE</name>
    <name type="ordered locus">Tola_0160</name>
</gene>
<evidence type="ECO:0000255" key="1">
    <source>
        <dbReference type="HAMAP-Rule" id="MF_00222"/>
    </source>
</evidence>
<feature type="chain" id="PRO_1000204283" description="Shikimate dehydrogenase (NADP(+))">
    <location>
        <begin position="1"/>
        <end position="273"/>
    </location>
</feature>
<feature type="active site" description="Proton acceptor" evidence="1">
    <location>
        <position position="65"/>
    </location>
</feature>
<feature type="binding site" evidence="1">
    <location>
        <begin position="14"/>
        <end position="16"/>
    </location>
    <ligand>
        <name>shikimate</name>
        <dbReference type="ChEBI" id="CHEBI:36208"/>
    </ligand>
</feature>
<feature type="binding site" evidence="1">
    <location>
        <position position="61"/>
    </location>
    <ligand>
        <name>shikimate</name>
        <dbReference type="ChEBI" id="CHEBI:36208"/>
    </ligand>
</feature>
<feature type="binding site" evidence="1">
    <location>
        <position position="86"/>
    </location>
    <ligand>
        <name>shikimate</name>
        <dbReference type="ChEBI" id="CHEBI:36208"/>
    </ligand>
</feature>
<feature type="binding site" evidence="1">
    <location>
        <position position="102"/>
    </location>
    <ligand>
        <name>shikimate</name>
        <dbReference type="ChEBI" id="CHEBI:36208"/>
    </ligand>
</feature>
<feature type="binding site" evidence="1">
    <location>
        <begin position="126"/>
        <end position="130"/>
    </location>
    <ligand>
        <name>NADP(+)</name>
        <dbReference type="ChEBI" id="CHEBI:58349"/>
    </ligand>
</feature>
<feature type="binding site" evidence="1">
    <location>
        <begin position="150"/>
        <end position="155"/>
    </location>
    <ligand>
        <name>NADP(+)</name>
        <dbReference type="ChEBI" id="CHEBI:58349"/>
    </ligand>
</feature>
<feature type="binding site" evidence="1">
    <location>
        <position position="213"/>
    </location>
    <ligand>
        <name>NADP(+)</name>
        <dbReference type="ChEBI" id="CHEBI:58349"/>
    </ligand>
</feature>
<feature type="binding site" evidence="1">
    <location>
        <position position="215"/>
    </location>
    <ligand>
        <name>shikimate</name>
        <dbReference type="ChEBI" id="CHEBI:36208"/>
    </ligand>
</feature>
<feature type="binding site" evidence="1">
    <location>
        <position position="237"/>
    </location>
    <ligand>
        <name>NADP(+)</name>
        <dbReference type="ChEBI" id="CHEBI:58349"/>
    </ligand>
</feature>
<organism>
    <name type="scientific">Tolumonas auensis (strain DSM 9187 / NBRC 110442 / TA 4)</name>
    <dbReference type="NCBI Taxonomy" id="595494"/>
    <lineage>
        <taxon>Bacteria</taxon>
        <taxon>Pseudomonadati</taxon>
        <taxon>Pseudomonadota</taxon>
        <taxon>Gammaproteobacteria</taxon>
        <taxon>Aeromonadales</taxon>
        <taxon>Aeromonadaceae</taxon>
        <taxon>Tolumonas</taxon>
    </lineage>
</organism>
<reference key="1">
    <citation type="submission" date="2009-05" db="EMBL/GenBank/DDBJ databases">
        <title>Complete sequence of Tolumonas auensis DSM 9187.</title>
        <authorList>
            <consortium name="US DOE Joint Genome Institute"/>
            <person name="Lucas S."/>
            <person name="Copeland A."/>
            <person name="Lapidus A."/>
            <person name="Glavina del Rio T."/>
            <person name="Tice H."/>
            <person name="Bruce D."/>
            <person name="Goodwin L."/>
            <person name="Pitluck S."/>
            <person name="Chertkov O."/>
            <person name="Brettin T."/>
            <person name="Detter J.C."/>
            <person name="Han C."/>
            <person name="Larimer F."/>
            <person name="Land M."/>
            <person name="Hauser L."/>
            <person name="Kyrpides N."/>
            <person name="Mikhailova N."/>
            <person name="Spring S."/>
            <person name="Beller H."/>
        </authorList>
    </citation>
    <scope>NUCLEOTIDE SEQUENCE [LARGE SCALE GENOMIC DNA]</scope>
    <source>
        <strain>DSM 9187 / NBRC 110442 / TA 4</strain>
    </source>
</reference>
<keyword id="KW-0028">Amino-acid biosynthesis</keyword>
<keyword id="KW-0057">Aromatic amino acid biosynthesis</keyword>
<keyword id="KW-0521">NADP</keyword>
<keyword id="KW-0560">Oxidoreductase</keyword>
<keyword id="KW-1185">Reference proteome</keyword>
<protein>
    <recommendedName>
        <fullName evidence="1">Shikimate dehydrogenase (NADP(+))</fullName>
        <shortName evidence="1">SDH</shortName>
        <ecNumber evidence="1">1.1.1.25</ecNumber>
    </recommendedName>
</protein>